<accession>A6VQ74</accession>
<proteinExistence type="inferred from homology"/>
<sequence length="257" mass="28454">MLAKRIIPCLDVRDGQVVKGVQFRNHEIIGDIVPLAKRYAEEGADELVFYDITASSDGRTVDKSWVERVAEVIDIPFCVAGGIKTIADAEQIFAFGADKISINSPALADPNLITALADRFGVQAIVVGIDSWFEKETGKYWVNQYTGDESRTRQTNWQLLDWVKEVQQRGAGEIVLNMMNQDGVRNGYDLVQLKKVREVCKVPLIASGGAGETVHFRDAFVEANVDGALAASVFHKQIINIGELKAYLTKEGVEIRR</sequence>
<name>HIS6_ACTSZ</name>
<keyword id="KW-0028">Amino-acid biosynthesis</keyword>
<keyword id="KW-0963">Cytoplasm</keyword>
<keyword id="KW-0368">Histidine biosynthesis</keyword>
<keyword id="KW-0456">Lyase</keyword>
<keyword id="KW-1185">Reference proteome</keyword>
<gene>
    <name evidence="1" type="primary">hisF</name>
    <name type="ordered locus">Asuc_1769</name>
</gene>
<comment type="function">
    <text evidence="1">IGPS catalyzes the conversion of PRFAR and glutamine to IGP, AICAR and glutamate. The HisF subunit catalyzes the cyclization activity that produces IGP and AICAR from PRFAR using the ammonia provided by the HisH subunit.</text>
</comment>
<comment type="catalytic activity">
    <reaction evidence="1">
        <text>5-[(5-phospho-1-deoxy-D-ribulos-1-ylimino)methylamino]-1-(5-phospho-beta-D-ribosyl)imidazole-4-carboxamide + L-glutamine = D-erythro-1-(imidazol-4-yl)glycerol 3-phosphate + 5-amino-1-(5-phospho-beta-D-ribosyl)imidazole-4-carboxamide + L-glutamate + H(+)</text>
        <dbReference type="Rhea" id="RHEA:24793"/>
        <dbReference type="ChEBI" id="CHEBI:15378"/>
        <dbReference type="ChEBI" id="CHEBI:29985"/>
        <dbReference type="ChEBI" id="CHEBI:58278"/>
        <dbReference type="ChEBI" id="CHEBI:58359"/>
        <dbReference type="ChEBI" id="CHEBI:58475"/>
        <dbReference type="ChEBI" id="CHEBI:58525"/>
        <dbReference type="EC" id="4.3.2.10"/>
    </reaction>
</comment>
<comment type="pathway">
    <text evidence="1">Amino-acid biosynthesis; L-histidine biosynthesis; L-histidine from 5-phospho-alpha-D-ribose 1-diphosphate: step 5/9.</text>
</comment>
<comment type="subunit">
    <text evidence="1">Heterodimer of HisH and HisF.</text>
</comment>
<comment type="subcellular location">
    <subcellularLocation>
        <location evidence="1">Cytoplasm</location>
    </subcellularLocation>
</comment>
<comment type="similarity">
    <text evidence="1">Belongs to the HisA/HisF family.</text>
</comment>
<protein>
    <recommendedName>
        <fullName evidence="1">Imidazole glycerol phosphate synthase subunit HisF</fullName>
        <ecNumber evidence="1">4.3.2.10</ecNumber>
    </recommendedName>
    <alternativeName>
        <fullName evidence="1">IGP synthase cyclase subunit</fullName>
    </alternativeName>
    <alternativeName>
        <fullName evidence="1">IGP synthase subunit HisF</fullName>
    </alternativeName>
    <alternativeName>
        <fullName evidence="1">ImGP synthase subunit HisF</fullName>
        <shortName evidence="1">IGPS subunit HisF</shortName>
    </alternativeName>
</protein>
<evidence type="ECO:0000255" key="1">
    <source>
        <dbReference type="HAMAP-Rule" id="MF_01013"/>
    </source>
</evidence>
<dbReference type="EC" id="4.3.2.10" evidence="1"/>
<dbReference type="EMBL" id="CP000746">
    <property type="protein sequence ID" value="ABR75121.1"/>
    <property type="molecule type" value="Genomic_DNA"/>
</dbReference>
<dbReference type="RefSeq" id="WP_012073498.1">
    <property type="nucleotide sequence ID" value="NC_009655.1"/>
</dbReference>
<dbReference type="SMR" id="A6VQ74"/>
<dbReference type="STRING" id="339671.Asuc_1769"/>
<dbReference type="KEGG" id="asu:Asuc_1769"/>
<dbReference type="eggNOG" id="COG0107">
    <property type="taxonomic scope" value="Bacteria"/>
</dbReference>
<dbReference type="HOGENOM" id="CLU_048577_4_0_6"/>
<dbReference type="OrthoDB" id="9781903at2"/>
<dbReference type="UniPathway" id="UPA00031">
    <property type="reaction ID" value="UER00010"/>
</dbReference>
<dbReference type="Proteomes" id="UP000001114">
    <property type="component" value="Chromosome"/>
</dbReference>
<dbReference type="GO" id="GO:0005737">
    <property type="term" value="C:cytoplasm"/>
    <property type="evidence" value="ECO:0007669"/>
    <property type="project" value="UniProtKB-SubCell"/>
</dbReference>
<dbReference type="GO" id="GO:0000107">
    <property type="term" value="F:imidazoleglycerol-phosphate synthase activity"/>
    <property type="evidence" value="ECO:0007669"/>
    <property type="project" value="UniProtKB-UniRule"/>
</dbReference>
<dbReference type="GO" id="GO:0016829">
    <property type="term" value="F:lyase activity"/>
    <property type="evidence" value="ECO:0007669"/>
    <property type="project" value="UniProtKB-KW"/>
</dbReference>
<dbReference type="GO" id="GO:0000105">
    <property type="term" value="P:L-histidine biosynthetic process"/>
    <property type="evidence" value="ECO:0007669"/>
    <property type="project" value="UniProtKB-UniRule"/>
</dbReference>
<dbReference type="CDD" id="cd04731">
    <property type="entry name" value="HisF"/>
    <property type="match status" value="1"/>
</dbReference>
<dbReference type="FunFam" id="3.20.20.70:FF:000006">
    <property type="entry name" value="Imidazole glycerol phosphate synthase subunit HisF"/>
    <property type="match status" value="1"/>
</dbReference>
<dbReference type="Gene3D" id="3.20.20.70">
    <property type="entry name" value="Aldolase class I"/>
    <property type="match status" value="1"/>
</dbReference>
<dbReference type="HAMAP" id="MF_01013">
    <property type="entry name" value="HisF"/>
    <property type="match status" value="1"/>
</dbReference>
<dbReference type="InterPro" id="IPR013785">
    <property type="entry name" value="Aldolase_TIM"/>
</dbReference>
<dbReference type="InterPro" id="IPR006062">
    <property type="entry name" value="His_biosynth"/>
</dbReference>
<dbReference type="InterPro" id="IPR004651">
    <property type="entry name" value="HisF"/>
</dbReference>
<dbReference type="InterPro" id="IPR050064">
    <property type="entry name" value="IGPS_HisA/HisF"/>
</dbReference>
<dbReference type="InterPro" id="IPR011060">
    <property type="entry name" value="RibuloseP-bd_barrel"/>
</dbReference>
<dbReference type="NCBIfam" id="TIGR00735">
    <property type="entry name" value="hisF"/>
    <property type="match status" value="1"/>
</dbReference>
<dbReference type="PANTHER" id="PTHR21235:SF2">
    <property type="entry name" value="IMIDAZOLE GLYCEROL PHOSPHATE SYNTHASE HISHF"/>
    <property type="match status" value="1"/>
</dbReference>
<dbReference type="PANTHER" id="PTHR21235">
    <property type="entry name" value="IMIDAZOLE GLYCEROL PHOSPHATE SYNTHASE SUBUNIT HISF/H IGP SYNTHASE SUBUNIT HISF/H"/>
    <property type="match status" value="1"/>
</dbReference>
<dbReference type="Pfam" id="PF00977">
    <property type="entry name" value="His_biosynth"/>
    <property type="match status" value="1"/>
</dbReference>
<dbReference type="SUPFAM" id="SSF51366">
    <property type="entry name" value="Ribulose-phoshate binding barrel"/>
    <property type="match status" value="1"/>
</dbReference>
<feature type="chain" id="PRO_1000072920" description="Imidazole glycerol phosphate synthase subunit HisF">
    <location>
        <begin position="1"/>
        <end position="257"/>
    </location>
</feature>
<feature type="active site" evidence="1">
    <location>
        <position position="11"/>
    </location>
</feature>
<feature type="active site" evidence="1">
    <location>
        <position position="130"/>
    </location>
</feature>
<organism>
    <name type="scientific">Actinobacillus succinogenes (strain ATCC 55618 / DSM 22257 / CCUG 43843 / 130Z)</name>
    <dbReference type="NCBI Taxonomy" id="339671"/>
    <lineage>
        <taxon>Bacteria</taxon>
        <taxon>Pseudomonadati</taxon>
        <taxon>Pseudomonadota</taxon>
        <taxon>Gammaproteobacteria</taxon>
        <taxon>Pasteurellales</taxon>
        <taxon>Pasteurellaceae</taxon>
        <taxon>Actinobacillus</taxon>
    </lineage>
</organism>
<reference key="1">
    <citation type="journal article" date="2010" name="BMC Genomics">
        <title>A genomic perspective on the potential of Actinobacillus succinogenes for industrial succinate production.</title>
        <authorList>
            <person name="McKinlay J.B."/>
            <person name="Laivenieks M."/>
            <person name="Schindler B.D."/>
            <person name="McKinlay A.A."/>
            <person name="Siddaramappa S."/>
            <person name="Challacombe J.F."/>
            <person name="Lowry S.R."/>
            <person name="Clum A."/>
            <person name="Lapidus A.L."/>
            <person name="Burkhart K.B."/>
            <person name="Harkins V."/>
            <person name="Vieille C."/>
        </authorList>
    </citation>
    <scope>NUCLEOTIDE SEQUENCE [LARGE SCALE GENOMIC DNA]</scope>
    <source>
        <strain>ATCC 55618 / DSM 22257 / CCUG 43843 / 130Z</strain>
    </source>
</reference>